<organismHost>
    <name type="scientific">Aotus trivirgatus</name>
    <name type="common">Three-striped night monkey</name>
    <name type="synonym">Douroucouli</name>
    <dbReference type="NCBI Taxonomy" id="9505"/>
</organismHost>
<name>ORF3_TTVZ1</name>
<proteinExistence type="predicted"/>
<keyword id="KW-1185">Reference proteome</keyword>
<organism>
    <name type="scientific">Torque teno douroucouli virus (isolate At-TTV3)</name>
    <dbReference type="NCBI Taxonomy" id="766187"/>
    <lineage>
        <taxon>Viruses</taxon>
        <taxon>Viruses incertae sedis</taxon>
        <taxon>Anelloviridae</taxon>
        <taxon>Zetatorquevirus</taxon>
        <taxon>Zetatorquevirus aotid1</taxon>
    </lineage>
</organism>
<evidence type="ECO:0000256" key="1">
    <source>
        <dbReference type="SAM" id="MobiDB-lite"/>
    </source>
</evidence>
<sequence length="151" mass="16371">MAELASIIRPTKTPGRTSGRSTPGAAHLPPPLSTGLSDLLMLLQSPQKPGSGRARRRTVCRPRRSGPDGDFRPSSRRRTPRTRTSDTSRRRRTPAAPTRRTVCRRRPSSSSNTSSGTATSGESSEADWRDSSSASDDDRIPSSKTTTLKAR</sequence>
<feature type="chain" id="PRO_0000404294" description="Uncharacterized ORF3 protein">
    <location>
        <begin position="1"/>
        <end position="151"/>
    </location>
</feature>
<feature type="region of interest" description="Disordered" evidence="1">
    <location>
        <begin position="1"/>
        <end position="151"/>
    </location>
</feature>
<feature type="compositionally biased region" description="Low complexity" evidence="1">
    <location>
        <begin position="33"/>
        <end position="45"/>
    </location>
</feature>
<feature type="compositionally biased region" description="Basic residues" evidence="1">
    <location>
        <begin position="53"/>
        <end position="64"/>
    </location>
</feature>
<feature type="compositionally biased region" description="Low complexity" evidence="1">
    <location>
        <begin position="108"/>
        <end position="123"/>
    </location>
</feature>
<feature type="compositionally biased region" description="Basic and acidic residues" evidence="1">
    <location>
        <begin position="126"/>
        <end position="141"/>
    </location>
</feature>
<accession>Q9DUB6</accession>
<protein>
    <recommendedName>
        <fullName>Uncharacterized ORF3 protein</fullName>
    </recommendedName>
</protein>
<reference key="1">
    <citation type="journal article" date="2000" name="Virology">
        <title>Species-specific TT viruses in humans and nonhuman primates and their phylogenetic relatedness.</title>
        <authorList>
            <person name="Okamoto H."/>
            <person name="Nishizawa T."/>
            <person name="Tawara A."/>
            <person name="Peng Y."/>
            <person name="Takahashi M."/>
            <person name="Kishimoto J."/>
            <person name="Tanaka T."/>
            <person name="Miyakawa Y."/>
            <person name="Mayumi M."/>
        </authorList>
    </citation>
    <scope>NUCLEOTIDE SEQUENCE [GENOMIC DNA]</scope>
</reference>
<dbReference type="EMBL" id="AB041961">
    <property type="protein sequence ID" value="BAB19321.1"/>
    <property type="molecule type" value="Genomic_DNA"/>
</dbReference>
<dbReference type="RefSeq" id="YP_003587888.1">
    <property type="nucleotide sequence ID" value="NC_014087.1"/>
</dbReference>
<dbReference type="KEGG" id="vg:9086658"/>
<dbReference type="Proteomes" id="UP000007080">
    <property type="component" value="Segment"/>
</dbReference>
<gene>
    <name type="ORF">ORF3</name>
</gene>